<dbReference type="EMBL" id="AB016875">
    <property type="protein sequence ID" value="BAB11625.1"/>
    <property type="molecule type" value="Genomic_DNA"/>
</dbReference>
<dbReference type="EMBL" id="CP002688">
    <property type="protein sequence ID" value="AED94988.1"/>
    <property type="molecule type" value="Genomic_DNA"/>
</dbReference>
<dbReference type="EMBL" id="AK175583">
    <property type="protein sequence ID" value="BAD43346.1"/>
    <property type="molecule type" value="mRNA"/>
</dbReference>
<dbReference type="EMBL" id="BT023453">
    <property type="protein sequence ID" value="AAY56444.1"/>
    <property type="molecule type" value="mRNA"/>
</dbReference>
<dbReference type="EMBL" id="BT025626">
    <property type="protein sequence ID" value="ABF59044.1"/>
    <property type="molecule type" value="mRNA"/>
</dbReference>
<dbReference type="RefSeq" id="NP_199175.1">
    <property type="nucleotide sequence ID" value="NM_123728.4"/>
</dbReference>
<dbReference type="BioGRID" id="19632">
    <property type="interactions" value="10"/>
</dbReference>
<dbReference type="FunCoup" id="Q9FIX8">
    <property type="interactions" value="1"/>
</dbReference>
<dbReference type="IntAct" id="Q9FIX8">
    <property type="interactions" value="10"/>
</dbReference>
<dbReference type="STRING" id="3702.Q9FIX8"/>
<dbReference type="PaxDb" id="3702-AT5G43620.1"/>
<dbReference type="EnsemblPlants" id="AT5G43620.1">
    <property type="protein sequence ID" value="AT5G43620.1"/>
    <property type="gene ID" value="AT5G43620"/>
</dbReference>
<dbReference type="GeneID" id="834382"/>
<dbReference type="Gramene" id="AT5G43620.1">
    <property type="protein sequence ID" value="AT5G43620.1"/>
    <property type="gene ID" value="AT5G43620"/>
</dbReference>
<dbReference type="KEGG" id="ath:AT5G43620"/>
<dbReference type="Araport" id="AT5G43620"/>
<dbReference type="TAIR" id="AT5G43620"/>
<dbReference type="eggNOG" id="KOG2071">
    <property type="taxonomic scope" value="Eukaryota"/>
</dbReference>
<dbReference type="HOGENOM" id="CLU_046922_0_0_1"/>
<dbReference type="InParanoid" id="Q9FIX8"/>
<dbReference type="OMA" id="CYQEERN"/>
<dbReference type="PhylomeDB" id="Q9FIX8"/>
<dbReference type="PRO" id="PR:Q9FIX8"/>
<dbReference type="Proteomes" id="UP000006548">
    <property type="component" value="Chromosome 5"/>
</dbReference>
<dbReference type="ExpressionAtlas" id="Q9FIX8">
    <property type="expression patterns" value="baseline and differential"/>
</dbReference>
<dbReference type="GO" id="GO:0005634">
    <property type="term" value="C:nucleus"/>
    <property type="evidence" value="ECO:0007669"/>
    <property type="project" value="UniProtKB-SubCell"/>
</dbReference>
<dbReference type="GO" id="GO:0003729">
    <property type="term" value="F:mRNA binding"/>
    <property type="evidence" value="ECO:0007669"/>
    <property type="project" value="InterPro"/>
</dbReference>
<dbReference type="GO" id="GO:0000993">
    <property type="term" value="F:RNA polymerase II complex binding"/>
    <property type="evidence" value="ECO:0007669"/>
    <property type="project" value="InterPro"/>
</dbReference>
<dbReference type="GO" id="GO:0008270">
    <property type="term" value="F:zinc ion binding"/>
    <property type="evidence" value="ECO:0007669"/>
    <property type="project" value="UniProtKB-KW"/>
</dbReference>
<dbReference type="GO" id="GO:0031124">
    <property type="term" value="P:mRNA 3'-end processing"/>
    <property type="evidence" value="ECO:0007669"/>
    <property type="project" value="InterPro"/>
</dbReference>
<dbReference type="GO" id="GO:0006369">
    <property type="term" value="P:termination of RNA polymerase II transcription"/>
    <property type="evidence" value="ECO:0007669"/>
    <property type="project" value="InterPro"/>
</dbReference>
<dbReference type="InterPro" id="IPR045154">
    <property type="entry name" value="PCF11-like"/>
</dbReference>
<dbReference type="InterPro" id="IPR057242">
    <property type="entry name" value="PCFS4-like"/>
</dbReference>
<dbReference type="InterPro" id="IPR013087">
    <property type="entry name" value="Znf_C2H2_type"/>
</dbReference>
<dbReference type="PANTHER" id="PTHR15921:SF11">
    <property type="entry name" value="POLYADENYLATION AND CLEAVAGE FACTOR HOMOLOG 1-RELATED"/>
    <property type="match status" value="1"/>
</dbReference>
<dbReference type="PANTHER" id="PTHR15921">
    <property type="entry name" value="PRE-MRNA CLEAVAGE COMPLEX II"/>
    <property type="match status" value="1"/>
</dbReference>
<dbReference type="Pfam" id="PF23228">
    <property type="entry name" value="zf_PCFS4"/>
    <property type="match status" value="1"/>
</dbReference>
<dbReference type="PROSITE" id="PS00028">
    <property type="entry name" value="ZINC_FINGER_C2H2_1"/>
    <property type="match status" value="1"/>
</dbReference>
<name>PCFS5_ARATH</name>
<protein>
    <recommendedName>
        <fullName evidence="6">Polyadenylation and cleavage factor homolog 5</fullName>
    </recommendedName>
</protein>
<feature type="chain" id="PRO_0000431351" description="Polyadenylation and cleavage factor homolog 5">
    <location>
        <begin position="1"/>
        <end position="410"/>
    </location>
</feature>
<feature type="zinc finger region" description="C2H2-type" evidence="2">
    <location>
        <begin position="247"/>
        <end position="269"/>
    </location>
</feature>
<feature type="region of interest" description="Disordered" evidence="3">
    <location>
        <begin position="1"/>
        <end position="32"/>
    </location>
</feature>
<feature type="coiled-coil region" evidence="1">
    <location>
        <begin position="191"/>
        <end position="214"/>
    </location>
</feature>
<feature type="compositionally biased region" description="Polar residues" evidence="3">
    <location>
        <begin position="1"/>
        <end position="17"/>
    </location>
</feature>
<organism evidence="9">
    <name type="scientific">Arabidopsis thaliana</name>
    <name type="common">Mouse-ear cress</name>
    <dbReference type="NCBI Taxonomy" id="3702"/>
    <lineage>
        <taxon>Eukaryota</taxon>
        <taxon>Viridiplantae</taxon>
        <taxon>Streptophyta</taxon>
        <taxon>Embryophyta</taxon>
        <taxon>Tracheophyta</taxon>
        <taxon>Spermatophyta</taxon>
        <taxon>Magnoliopsida</taxon>
        <taxon>eudicotyledons</taxon>
        <taxon>Gunneridae</taxon>
        <taxon>Pentapetalae</taxon>
        <taxon>rosids</taxon>
        <taxon>malvids</taxon>
        <taxon>Brassicales</taxon>
        <taxon>Brassicaceae</taxon>
        <taxon>Camelineae</taxon>
        <taxon>Arabidopsis</taxon>
    </lineage>
</organism>
<evidence type="ECO:0000255" key="1"/>
<evidence type="ECO:0000255" key="2">
    <source>
        <dbReference type="PROSITE-ProRule" id="PRU00042"/>
    </source>
</evidence>
<evidence type="ECO:0000256" key="3">
    <source>
        <dbReference type="SAM" id="MobiDB-lite"/>
    </source>
</evidence>
<evidence type="ECO:0000269" key="4">
    <source>
    </source>
</evidence>
<evidence type="ECO:0000303" key="5">
    <source>
    </source>
</evidence>
<evidence type="ECO:0000305" key="6"/>
<evidence type="ECO:0000312" key="7">
    <source>
        <dbReference type="Araport" id="AT5G43620"/>
    </source>
</evidence>
<evidence type="ECO:0000312" key="8">
    <source>
        <dbReference type="EMBL" id="BAB11625.1"/>
    </source>
</evidence>
<evidence type="ECO:0000312" key="9">
    <source>
        <dbReference type="Proteomes" id="UP000006548"/>
    </source>
</evidence>
<comment type="subunit">
    <text evidence="4">Forms a complex with cleavage and polyadenylation specificity factor (CPSF) subunits CSTF77, CLPS3, PCFS4 and PCFS1.</text>
</comment>
<comment type="interaction">
    <interactant intactId="EBI-1775691">
        <id>Q9FIX8</id>
    </interactant>
    <interactant intactId="EBI-4424563">
        <id>Q93Z00</id>
        <label>TCP14</label>
    </interactant>
    <organismsDiffer>false</organismsDiffer>
    <experiments>4</experiments>
</comment>
<comment type="interaction">
    <interactant intactId="EBI-1775691">
        <id>Q9FIX8</id>
    </interactant>
    <interactant intactId="EBI-15192325">
        <id>Q8LPR5</id>
        <label>TCP4</label>
    </interactant>
    <organismsDiffer>false</organismsDiffer>
    <experiments>3</experiments>
</comment>
<comment type="subcellular location">
    <subcellularLocation>
        <location evidence="6">Nucleus</location>
    </subcellularLocation>
</comment>
<gene>
    <name evidence="5" type="primary">PCFS5</name>
    <name evidence="7" type="ordered locus">At5g43620</name>
    <name evidence="8" type="ORF">K9D7.12</name>
</gene>
<accession>Q9FIX8</accession>
<proteinExistence type="evidence at protein level"/>
<reference key="1">
    <citation type="journal article" date="1998" name="DNA Res.">
        <title>Structural analysis of Arabidopsis thaliana chromosome 5. VIII. Sequence features of the regions of 1,081,958 bp covered by seventeen physically assigned P1 and TAC clones.</title>
        <authorList>
            <person name="Asamizu E."/>
            <person name="Sato S."/>
            <person name="Kaneko T."/>
            <person name="Nakamura Y."/>
            <person name="Kotani H."/>
            <person name="Miyajima N."/>
            <person name="Tabata S."/>
        </authorList>
    </citation>
    <scope>NUCLEOTIDE SEQUENCE [LARGE SCALE GENOMIC DNA]</scope>
    <source>
        <strain>cv. Columbia</strain>
    </source>
</reference>
<reference key="2">
    <citation type="journal article" date="2017" name="Plant J.">
        <title>Araport11: a complete reannotation of the Arabidopsis thaliana reference genome.</title>
        <authorList>
            <person name="Cheng C.Y."/>
            <person name="Krishnakumar V."/>
            <person name="Chan A.P."/>
            <person name="Thibaud-Nissen F."/>
            <person name="Schobel S."/>
            <person name="Town C.D."/>
        </authorList>
    </citation>
    <scope>GENOME REANNOTATION</scope>
    <source>
        <strain>cv. Columbia</strain>
    </source>
</reference>
<reference key="3">
    <citation type="submission" date="2004-09" db="EMBL/GenBank/DDBJ databases">
        <title>Large-scale analysis of RIKEN Arabidopsis full-length (RAFL) cDNAs.</title>
        <authorList>
            <person name="Totoki Y."/>
            <person name="Seki M."/>
            <person name="Ishida J."/>
            <person name="Nakajima M."/>
            <person name="Enju A."/>
            <person name="Kamiya A."/>
            <person name="Narusaka M."/>
            <person name="Shin-i T."/>
            <person name="Nakagawa M."/>
            <person name="Sakamoto N."/>
            <person name="Oishi K."/>
            <person name="Kohara Y."/>
            <person name="Kobayashi M."/>
            <person name="Toyoda A."/>
            <person name="Sakaki Y."/>
            <person name="Sakurai T."/>
            <person name="Iida K."/>
            <person name="Akiyama K."/>
            <person name="Satou M."/>
            <person name="Toyoda T."/>
            <person name="Konagaya A."/>
            <person name="Carninci P."/>
            <person name="Kawai J."/>
            <person name="Hayashizaki Y."/>
            <person name="Shinozaki K."/>
        </authorList>
    </citation>
    <scope>NUCLEOTIDE SEQUENCE [LARGE SCALE MRNA]</scope>
    <source>
        <strain>cv. Columbia</strain>
    </source>
</reference>
<reference key="4">
    <citation type="submission" date="2005-05" db="EMBL/GenBank/DDBJ databases">
        <title>Arabidopsis ORF clones.</title>
        <authorList>
            <person name="Cheuk R.F."/>
            <person name="Chen H."/>
            <person name="Kim C.J."/>
            <person name="Shinn P."/>
            <person name="Ecker J.R."/>
        </authorList>
    </citation>
    <scope>NUCLEOTIDE SEQUENCE [LARGE SCALE MRNA]</scope>
    <source>
        <strain>cv. Columbia</strain>
    </source>
</reference>
<reference key="5">
    <citation type="journal article" date="2004" name="BMC Genomics">
        <title>Conservation, diversification and expansion of C2H2 zinc finger proteins in the Arabidopsis thaliana genome.</title>
        <authorList>
            <person name="Englbrecht C.C."/>
            <person name="Schoof H."/>
            <person name="Boehm S."/>
        </authorList>
    </citation>
    <scope>GENE FAMILY</scope>
</reference>
<reference key="6">
    <citation type="journal article" date="2008" name="BMC Genomics">
        <title>Arabidopsis mRNA polyadenylation machinery: comprehensive analysis of protein-protein interactions and gene expression profiling.</title>
        <authorList>
            <person name="Hunt A.G."/>
            <person name="Xu R."/>
            <person name="Addepalli B."/>
            <person name="Rao S."/>
            <person name="Forbes K.P."/>
            <person name="Meeks L.R."/>
            <person name="Xing D."/>
            <person name="Mo M."/>
            <person name="Zhao H."/>
            <person name="Bandyopadhyay A."/>
            <person name="Dampanaboina L."/>
            <person name="Marion A."/>
            <person name="Von Lanken C."/>
            <person name="Li Q.Q."/>
        </authorList>
    </citation>
    <scope>INTERACTION WITH CSTF77; CLPS3; PCFS4 AND PCFS1</scope>
    <scope>GENE FAMILY</scope>
    <scope>NOMENCLATURE</scope>
</reference>
<sequence length="410" mass="46049">MASNGSFSAQRNANAGTTMKRRNDNRGYGGGIGCYQEERNRYAPPQKRFRSQLQQQFRSGHNPLYHYGSNTNNNVSRVSSQSYNNYGVDVIASNSSFALPNNDSNTNNYQKPFVVYGNPNPQIVPLPLPYRKLDPLDSLPQWVPNSTPNYPVRSSNFVPNTPDFTNVQNPMNHSNMVSVVSQSMHQPIVLSKELTDLLSLLNNEKEKKTSEASNNDSLPVGLSFDNPSSLNVRHESVIKSLYSDMPRQCTSCGVRFKCQEEHSKHMDWHVRKNRSVKTTTRLGQQPKKSRGWLASASLWLCAPTGGGTVEVASFGGGEMQKKNEKDQVQKQHMVPADEDQKNCALCVEPFEEFFSHEADDWMYKDAVYLTKNGRIVHVKCMPEPRPAKDLREPSRVMSVTVPSVAKAILC</sequence>
<keyword id="KW-0175">Coiled coil</keyword>
<keyword id="KW-0479">Metal-binding</keyword>
<keyword id="KW-0539">Nucleus</keyword>
<keyword id="KW-1185">Reference proteome</keyword>
<keyword id="KW-0862">Zinc</keyword>
<keyword id="KW-0863">Zinc-finger</keyword>